<comment type="function">
    <text evidence="1">Catalyzes the attachment of proline to tRNA(Pro) in a two-step reaction: proline is first activated by ATP to form Pro-AMP and then transferred to the acceptor end of tRNA(Pro).</text>
</comment>
<comment type="catalytic activity">
    <reaction evidence="1">
        <text>tRNA(Pro) + L-proline + ATP = L-prolyl-tRNA(Pro) + AMP + diphosphate</text>
        <dbReference type="Rhea" id="RHEA:14305"/>
        <dbReference type="Rhea" id="RHEA-COMP:9700"/>
        <dbReference type="Rhea" id="RHEA-COMP:9702"/>
        <dbReference type="ChEBI" id="CHEBI:30616"/>
        <dbReference type="ChEBI" id="CHEBI:33019"/>
        <dbReference type="ChEBI" id="CHEBI:60039"/>
        <dbReference type="ChEBI" id="CHEBI:78442"/>
        <dbReference type="ChEBI" id="CHEBI:78532"/>
        <dbReference type="ChEBI" id="CHEBI:456215"/>
        <dbReference type="EC" id="6.1.1.15"/>
    </reaction>
</comment>
<comment type="subunit">
    <text evidence="1">Homodimer.</text>
</comment>
<comment type="subcellular location">
    <subcellularLocation>
        <location evidence="1">Cytoplasm</location>
    </subcellularLocation>
</comment>
<comment type="similarity">
    <text evidence="1">Belongs to the class-II aminoacyl-tRNA synthetase family. ProS type 2 subfamily.</text>
</comment>
<sequence length="437" mass="48795">MRLSRHFLPVMKESPADAQIVSHKLMLRAGMIRQTAAGIYAWLPLGHRVLRKIEQIVREEQDRAGAIELLMPTMQSADLWRESGRYDAYGPEMLRIKDRHDREMLFGPTNEEMITAIFRDNARSYRDLPRILYHIQWKFRDEVRPRFGVMRGREFLMKDAYSFDLDIEGARHSYNRMFVAYLRTFRRMGLSAIPMQADTGPIGGDLSHEFIVLAPTGESEVFYHTNWEVERALDVDVDDVAALQGFVDGLTADYAATDEKRDPAREAAAGDSLKQSRGIEVGHIFYFGTKYSAAMGMTVQGPDGQPVTPQMGSYGIGVSRLMGAIIEASHDDAGIVWPDAVAPYTVGLINMRADDARCAAAADDLYAKLEAAGIETLYDDRDERGGAKFATMDLIGLPWQIVVGPKGLDKGVVELKRRATGEKVELSVEDAIARIAG</sequence>
<reference key="1">
    <citation type="journal article" date="2010" name="J. Bacteriol.">
        <title>Genome sequence of the dioxin-mineralizing bacterium Sphingomonas wittichii RW1.</title>
        <authorList>
            <person name="Miller T.R."/>
            <person name="Delcher A.L."/>
            <person name="Salzberg S.L."/>
            <person name="Saunders E."/>
            <person name="Detter J.C."/>
            <person name="Halden R.U."/>
        </authorList>
    </citation>
    <scope>NUCLEOTIDE SEQUENCE [LARGE SCALE GENOMIC DNA]</scope>
    <source>
        <strain>DSM 6014 / CCUG 31198 / JCM 15750 / NBRC 105917 / EY 4224 / RW1</strain>
    </source>
</reference>
<keyword id="KW-0030">Aminoacyl-tRNA synthetase</keyword>
<keyword id="KW-0067">ATP-binding</keyword>
<keyword id="KW-0963">Cytoplasm</keyword>
<keyword id="KW-0436">Ligase</keyword>
<keyword id="KW-0547">Nucleotide-binding</keyword>
<keyword id="KW-0648">Protein biosynthesis</keyword>
<keyword id="KW-1185">Reference proteome</keyword>
<proteinExistence type="inferred from homology"/>
<feature type="chain" id="PRO_1000069188" description="Proline--tRNA ligase">
    <location>
        <begin position="1"/>
        <end position="437"/>
    </location>
</feature>
<protein>
    <recommendedName>
        <fullName evidence="1">Proline--tRNA ligase</fullName>
        <ecNumber evidence="1">6.1.1.15</ecNumber>
    </recommendedName>
    <alternativeName>
        <fullName evidence="1">Prolyl-tRNA synthetase</fullName>
        <shortName evidence="1">ProRS</shortName>
    </alternativeName>
</protein>
<dbReference type="EC" id="6.1.1.15" evidence="1"/>
<dbReference type="EMBL" id="CP000699">
    <property type="protein sequence ID" value="ABQ68706.1"/>
    <property type="molecule type" value="Genomic_DNA"/>
</dbReference>
<dbReference type="SMR" id="A5V8U0"/>
<dbReference type="STRING" id="392499.Swit_2347"/>
<dbReference type="PaxDb" id="392499-Swit_2347"/>
<dbReference type="KEGG" id="swi:Swit_2347"/>
<dbReference type="eggNOG" id="COG0442">
    <property type="taxonomic scope" value="Bacteria"/>
</dbReference>
<dbReference type="HOGENOM" id="CLU_016739_4_2_5"/>
<dbReference type="OrthoDB" id="9809052at2"/>
<dbReference type="Proteomes" id="UP000001989">
    <property type="component" value="Chromosome"/>
</dbReference>
<dbReference type="GO" id="GO:0005829">
    <property type="term" value="C:cytosol"/>
    <property type="evidence" value="ECO:0007669"/>
    <property type="project" value="TreeGrafter"/>
</dbReference>
<dbReference type="GO" id="GO:0005524">
    <property type="term" value="F:ATP binding"/>
    <property type="evidence" value="ECO:0007669"/>
    <property type="project" value="UniProtKB-UniRule"/>
</dbReference>
<dbReference type="GO" id="GO:0004827">
    <property type="term" value="F:proline-tRNA ligase activity"/>
    <property type="evidence" value="ECO:0007669"/>
    <property type="project" value="UniProtKB-UniRule"/>
</dbReference>
<dbReference type="GO" id="GO:0006433">
    <property type="term" value="P:prolyl-tRNA aminoacylation"/>
    <property type="evidence" value="ECO:0007669"/>
    <property type="project" value="UniProtKB-UniRule"/>
</dbReference>
<dbReference type="CDD" id="cd00861">
    <property type="entry name" value="ProRS_anticodon_short"/>
    <property type="match status" value="1"/>
</dbReference>
<dbReference type="CDD" id="cd00779">
    <property type="entry name" value="ProRS_core_prok"/>
    <property type="match status" value="1"/>
</dbReference>
<dbReference type="FunFam" id="3.30.930.10:FF:000042">
    <property type="entry name" value="probable proline--tRNA ligase, mitochondrial"/>
    <property type="match status" value="1"/>
</dbReference>
<dbReference type="FunFam" id="3.40.50.800:FF:000032">
    <property type="entry name" value="Proline--tRNA ligase"/>
    <property type="match status" value="1"/>
</dbReference>
<dbReference type="Gene3D" id="3.40.50.800">
    <property type="entry name" value="Anticodon-binding domain"/>
    <property type="match status" value="1"/>
</dbReference>
<dbReference type="Gene3D" id="3.30.930.10">
    <property type="entry name" value="Bira Bifunctional Protein, Domain 2"/>
    <property type="match status" value="1"/>
</dbReference>
<dbReference type="HAMAP" id="MF_01570">
    <property type="entry name" value="Pro_tRNA_synth_type2"/>
    <property type="match status" value="1"/>
</dbReference>
<dbReference type="InterPro" id="IPR002314">
    <property type="entry name" value="aa-tRNA-synt_IIb"/>
</dbReference>
<dbReference type="InterPro" id="IPR006195">
    <property type="entry name" value="aa-tRNA-synth_II"/>
</dbReference>
<dbReference type="InterPro" id="IPR045864">
    <property type="entry name" value="aa-tRNA-synth_II/BPL/LPL"/>
</dbReference>
<dbReference type="InterPro" id="IPR004154">
    <property type="entry name" value="Anticodon-bd"/>
</dbReference>
<dbReference type="InterPro" id="IPR036621">
    <property type="entry name" value="Anticodon-bd_dom_sf"/>
</dbReference>
<dbReference type="InterPro" id="IPR002316">
    <property type="entry name" value="Pro-tRNA-ligase_IIa"/>
</dbReference>
<dbReference type="InterPro" id="IPR004500">
    <property type="entry name" value="Pro-tRNA-synth_IIa_bac-type"/>
</dbReference>
<dbReference type="InterPro" id="IPR050062">
    <property type="entry name" value="Pro-tRNA_synthetase"/>
</dbReference>
<dbReference type="InterPro" id="IPR023716">
    <property type="entry name" value="Prolyl-tRNA_ligase_IIa_type2"/>
</dbReference>
<dbReference type="InterPro" id="IPR044140">
    <property type="entry name" value="ProRS_anticodon_short"/>
</dbReference>
<dbReference type="InterPro" id="IPR033730">
    <property type="entry name" value="ProRS_core_prok"/>
</dbReference>
<dbReference type="NCBIfam" id="NF008979">
    <property type="entry name" value="PRK12325.1"/>
    <property type="match status" value="1"/>
</dbReference>
<dbReference type="NCBIfam" id="TIGR00409">
    <property type="entry name" value="proS_fam_II"/>
    <property type="match status" value="1"/>
</dbReference>
<dbReference type="PANTHER" id="PTHR42753">
    <property type="entry name" value="MITOCHONDRIAL RIBOSOME PROTEIN L39/PROLYL-TRNA LIGASE FAMILY MEMBER"/>
    <property type="match status" value="1"/>
</dbReference>
<dbReference type="PANTHER" id="PTHR42753:SF2">
    <property type="entry name" value="PROLINE--TRNA LIGASE"/>
    <property type="match status" value="1"/>
</dbReference>
<dbReference type="Pfam" id="PF03129">
    <property type="entry name" value="HGTP_anticodon"/>
    <property type="match status" value="1"/>
</dbReference>
<dbReference type="Pfam" id="PF00587">
    <property type="entry name" value="tRNA-synt_2b"/>
    <property type="match status" value="1"/>
</dbReference>
<dbReference type="PRINTS" id="PR01046">
    <property type="entry name" value="TRNASYNTHPRO"/>
</dbReference>
<dbReference type="SUPFAM" id="SSF52954">
    <property type="entry name" value="Class II aaRS ABD-related"/>
    <property type="match status" value="1"/>
</dbReference>
<dbReference type="SUPFAM" id="SSF55681">
    <property type="entry name" value="Class II aaRS and biotin synthetases"/>
    <property type="match status" value="1"/>
</dbReference>
<dbReference type="PROSITE" id="PS50862">
    <property type="entry name" value="AA_TRNA_LIGASE_II"/>
    <property type="match status" value="1"/>
</dbReference>
<gene>
    <name evidence="1" type="primary">proS</name>
    <name type="ordered locus">Swit_2347</name>
</gene>
<name>SYP_RHIWR</name>
<evidence type="ECO:0000255" key="1">
    <source>
        <dbReference type="HAMAP-Rule" id="MF_01570"/>
    </source>
</evidence>
<accession>A5V8U0</accession>
<organism>
    <name type="scientific">Rhizorhabdus wittichii (strain DSM 6014 / CCUG 31198 / JCM 15750 / NBRC 105917 / EY 4224 / RW1)</name>
    <name type="common">Sphingomonas wittichii</name>
    <dbReference type="NCBI Taxonomy" id="392499"/>
    <lineage>
        <taxon>Bacteria</taxon>
        <taxon>Pseudomonadati</taxon>
        <taxon>Pseudomonadota</taxon>
        <taxon>Alphaproteobacteria</taxon>
        <taxon>Sphingomonadales</taxon>
        <taxon>Sphingomonadaceae</taxon>
        <taxon>Rhizorhabdus</taxon>
    </lineage>
</organism>